<feature type="chain" id="PRO_0000243664" description="Large ribosomal subunit protein bL20">
    <location>
        <begin position="1"/>
        <end position="119"/>
    </location>
</feature>
<evidence type="ECO:0000255" key="1">
    <source>
        <dbReference type="HAMAP-Rule" id="MF_00382"/>
    </source>
</evidence>
<evidence type="ECO:0000305" key="2"/>
<reference key="1">
    <citation type="submission" date="2005-10" db="EMBL/GenBank/DDBJ databases">
        <title>Complete sequence of chromosome 1 of Burkholderia sp. 383.</title>
        <authorList>
            <consortium name="US DOE Joint Genome Institute"/>
            <person name="Copeland A."/>
            <person name="Lucas S."/>
            <person name="Lapidus A."/>
            <person name="Barry K."/>
            <person name="Detter J.C."/>
            <person name="Glavina T."/>
            <person name="Hammon N."/>
            <person name="Israni S."/>
            <person name="Pitluck S."/>
            <person name="Chain P."/>
            <person name="Malfatti S."/>
            <person name="Shin M."/>
            <person name="Vergez L."/>
            <person name="Schmutz J."/>
            <person name="Larimer F."/>
            <person name="Land M."/>
            <person name="Kyrpides N."/>
            <person name="Lykidis A."/>
            <person name="Richardson P."/>
        </authorList>
    </citation>
    <scope>NUCLEOTIDE SEQUENCE [LARGE SCALE GENOMIC DNA]</scope>
    <source>
        <strain>ATCC 17760 / DSM 23089 / LMG 22485 / NCIMB 9086 / R18194 / 383</strain>
    </source>
</reference>
<protein>
    <recommendedName>
        <fullName evidence="1">Large ribosomal subunit protein bL20</fullName>
    </recommendedName>
    <alternativeName>
        <fullName evidence="2">50S ribosomal protein L20</fullName>
    </alternativeName>
</protein>
<gene>
    <name evidence="1" type="primary">rplT</name>
    <name type="ordered locus">Bcep18194_A4618</name>
</gene>
<organism>
    <name type="scientific">Burkholderia lata (strain ATCC 17760 / DSM 23089 / LMG 22485 / NCIMB 9086 / R18194 / 383)</name>
    <dbReference type="NCBI Taxonomy" id="482957"/>
    <lineage>
        <taxon>Bacteria</taxon>
        <taxon>Pseudomonadati</taxon>
        <taxon>Pseudomonadota</taxon>
        <taxon>Betaproteobacteria</taxon>
        <taxon>Burkholderiales</taxon>
        <taxon>Burkholderiaceae</taxon>
        <taxon>Burkholderia</taxon>
        <taxon>Burkholderia cepacia complex</taxon>
    </lineage>
</organism>
<sequence length="119" mass="13644">MPRVKRGVTARARHKKIINLAKGYRGRRNNVYRIAKQAVMRAGQYAYRDRRNKKRVFRALWITRINAAVRQHDMTYSVFINGLKKASIELDRKVLADMAVFDKAAFAAIVKQVKAAVAA</sequence>
<name>RL20_BURL3</name>
<comment type="function">
    <text evidence="1">Binds directly to 23S ribosomal RNA and is necessary for the in vitro assembly process of the 50S ribosomal subunit. It is not involved in the protein synthesizing functions of that subunit.</text>
</comment>
<comment type="similarity">
    <text evidence="1">Belongs to the bacterial ribosomal protein bL20 family.</text>
</comment>
<dbReference type="EMBL" id="CP000151">
    <property type="protein sequence ID" value="ABB08214.1"/>
    <property type="molecule type" value="Genomic_DNA"/>
</dbReference>
<dbReference type="RefSeq" id="WP_004192938.1">
    <property type="nucleotide sequence ID" value="NZ_WNDV01000032.1"/>
</dbReference>
<dbReference type="SMR" id="Q39H52"/>
<dbReference type="GeneID" id="98102114"/>
<dbReference type="KEGG" id="bur:Bcep18194_A4618"/>
<dbReference type="HOGENOM" id="CLU_123265_0_1_4"/>
<dbReference type="Proteomes" id="UP000002705">
    <property type="component" value="Chromosome 1"/>
</dbReference>
<dbReference type="GO" id="GO:1990904">
    <property type="term" value="C:ribonucleoprotein complex"/>
    <property type="evidence" value="ECO:0007669"/>
    <property type="project" value="UniProtKB-KW"/>
</dbReference>
<dbReference type="GO" id="GO:0005840">
    <property type="term" value="C:ribosome"/>
    <property type="evidence" value="ECO:0007669"/>
    <property type="project" value="UniProtKB-KW"/>
</dbReference>
<dbReference type="GO" id="GO:0019843">
    <property type="term" value="F:rRNA binding"/>
    <property type="evidence" value="ECO:0007669"/>
    <property type="project" value="UniProtKB-UniRule"/>
</dbReference>
<dbReference type="GO" id="GO:0003735">
    <property type="term" value="F:structural constituent of ribosome"/>
    <property type="evidence" value="ECO:0007669"/>
    <property type="project" value="InterPro"/>
</dbReference>
<dbReference type="GO" id="GO:0000027">
    <property type="term" value="P:ribosomal large subunit assembly"/>
    <property type="evidence" value="ECO:0007669"/>
    <property type="project" value="UniProtKB-UniRule"/>
</dbReference>
<dbReference type="GO" id="GO:0006412">
    <property type="term" value="P:translation"/>
    <property type="evidence" value="ECO:0007669"/>
    <property type="project" value="InterPro"/>
</dbReference>
<dbReference type="CDD" id="cd07026">
    <property type="entry name" value="Ribosomal_L20"/>
    <property type="match status" value="1"/>
</dbReference>
<dbReference type="FunFam" id="1.10.1900.20:FF:000001">
    <property type="entry name" value="50S ribosomal protein L20"/>
    <property type="match status" value="1"/>
</dbReference>
<dbReference type="Gene3D" id="6.10.160.10">
    <property type="match status" value="1"/>
</dbReference>
<dbReference type="Gene3D" id="1.10.1900.20">
    <property type="entry name" value="Ribosomal protein L20"/>
    <property type="match status" value="1"/>
</dbReference>
<dbReference type="HAMAP" id="MF_00382">
    <property type="entry name" value="Ribosomal_bL20"/>
    <property type="match status" value="1"/>
</dbReference>
<dbReference type="InterPro" id="IPR005813">
    <property type="entry name" value="Ribosomal_bL20"/>
</dbReference>
<dbReference type="InterPro" id="IPR049946">
    <property type="entry name" value="RIBOSOMAL_L20_CS"/>
</dbReference>
<dbReference type="InterPro" id="IPR035566">
    <property type="entry name" value="Ribosomal_protein_bL20_C"/>
</dbReference>
<dbReference type="NCBIfam" id="TIGR01032">
    <property type="entry name" value="rplT_bact"/>
    <property type="match status" value="1"/>
</dbReference>
<dbReference type="PANTHER" id="PTHR10986">
    <property type="entry name" value="39S RIBOSOMAL PROTEIN L20"/>
    <property type="match status" value="1"/>
</dbReference>
<dbReference type="Pfam" id="PF00453">
    <property type="entry name" value="Ribosomal_L20"/>
    <property type="match status" value="1"/>
</dbReference>
<dbReference type="PRINTS" id="PR00062">
    <property type="entry name" value="RIBOSOMALL20"/>
</dbReference>
<dbReference type="SUPFAM" id="SSF74731">
    <property type="entry name" value="Ribosomal protein L20"/>
    <property type="match status" value="1"/>
</dbReference>
<dbReference type="PROSITE" id="PS00937">
    <property type="entry name" value="RIBOSOMAL_L20"/>
    <property type="match status" value="1"/>
</dbReference>
<accession>Q39H52</accession>
<keyword id="KW-0687">Ribonucleoprotein</keyword>
<keyword id="KW-0689">Ribosomal protein</keyword>
<keyword id="KW-0694">RNA-binding</keyword>
<keyword id="KW-0699">rRNA-binding</keyword>
<proteinExistence type="inferred from homology"/>